<protein>
    <recommendedName>
        <fullName>Protein FixB</fullName>
    </recommendedName>
</protein>
<name>FIXB_AZOC5</name>
<comment type="function">
    <text>May play a role in a redox process involved in nitrogen fixation.</text>
</comment>
<comment type="subunit">
    <text evidence="2">FixA and FixB form a heterodimer.</text>
</comment>
<comment type="similarity">
    <text evidence="2">Belongs to the ETF alpha-subunit/FixB family.</text>
</comment>
<keyword id="KW-0249">Electron transport</keyword>
<keyword id="KW-0274">FAD</keyword>
<keyword id="KW-0285">Flavoprotein</keyword>
<keyword id="KW-0535">Nitrogen fixation</keyword>
<keyword id="KW-1185">Reference proteome</keyword>
<keyword id="KW-0813">Transport</keyword>
<dbReference type="EMBL" id="X55450">
    <property type="protein sequence ID" value="CAA39092.1"/>
    <property type="molecule type" value="Genomic_DNA"/>
</dbReference>
<dbReference type="EMBL" id="AP009384">
    <property type="protein sequence ID" value="BAF89446.1"/>
    <property type="molecule type" value="Genomic_DNA"/>
</dbReference>
<dbReference type="PIR" id="S14071">
    <property type="entry name" value="S14071"/>
</dbReference>
<dbReference type="RefSeq" id="WP_012171971.1">
    <property type="nucleotide sequence ID" value="NC_009937.1"/>
</dbReference>
<dbReference type="SMR" id="P26483"/>
<dbReference type="STRING" id="438753.AZC_3448"/>
<dbReference type="KEGG" id="azc:AZC_3448"/>
<dbReference type="eggNOG" id="COG2025">
    <property type="taxonomic scope" value="Bacteria"/>
</dbReference>
<dbReference type="HOGENOM" id="CLU_034178_1_1_5"/>
<dbReference type="Proteomes" id="UP000000270">
    <property type="component" value="Chromosome"/>
</dbReference>
<dbReference type="GO" id="GO:0009055">
    <property type="term" value="F:electron transfer activity"/>
    <property type="evidence" value="ECO:0007669"/>
    <property type="project" value="InterPro"/>
</dbReference>
<dbReference type="GO" id="GO:0050660">
    <property type="term" value="F:flavin adenine dinucleotide binding"/>
    <property type="evidence" value="ECO:0007669"/>
    <property type="project" value="InterPro"/>
</dbReference>
<dbReference type="GO" id="GO:0033539">
    <property type="term" value="P:fatty acid beta-oxidation using acyl-CoA dehydrogenase"/>
    <property type="evidence" value="ECO:0007669"/>
    <property type="project" value="TreeGrafter"/>
</dbReference>
<dbReference type="GO" id="GO:0009399">
    <property type="term" value="P:nitrogen fixation"/>
    <property type="evidence" value="ECO:0007669"/>
    <property type="project" value="UniProtKB-KW"/>
</dbReference>
<dbReference type="CDD" id="cd01715">
    <property type="entry name" value="ETF_alpha"/>
    <property type="match status" value="1"/>
</dbReference>
<dbReference type="Gene3D" id="3.40.50.620">
    <property type="entry name" value="HUPs"/>
    <property type="match status" value="1"/>
</dbReference>
<dbReference type="Gene3D" id="3.40.50.1220">
    <property type="entry name" value="TPP-binding domain"/>
    <property type="match status" value="1"/>
</dbReference>
<dbReference type="InterPro" id="IPR029035">
    <property type="entry name" value="DHS-like_NAD/FAD-binding_dom"/>
</dbReference>
<dbReference type="InterPro" id="IPR014730">
    <property type="entry name" value="ETF_a/b_N"/>
</dbReference>
<dbReference type="InterPro" id="IPR001308">
    <property type="entry name" value="ETF_a/FixB"/>
</dbReference>
<dbReference type="InterPro" id="IPR033947">
    <property type="entry name" value="ETF_alpha_N"/>
</dbReference>
<dbReference type="InterPro" id="IPR014731">
    <property type="entry name" value="ETF_asu_C"/>
</dbReference>
<dbReference type="InterPro" id="IPR018206">
    <property type="entry name" value="ETF_asu_C_CS"/>
</dbReference>
<dbReference type="InterPro" id="IPR014729">
    <property type="entry name" value="Rossmann-like_a/b/a_fold"/>
</dbReference>
<dbReference type="PANTHER" id="PTHR43153">
    <property type="entry name" value="ELECTRON TRANSFER FLAVOPROTEIN ALPHA"/>
    <property type="match status" value="1"/>
</dbReference>
<dbReference type="PANTHER" id="PTHR43153:SF1">
    <property type="entry name" value="ELECTRON TRANSFER FLAVOPROTEIN SUBUNIT ALPHA, MITOCHONDRIAL"/>
    <property type="match status" value="1"/>
</dbReference>
<dbReference type="Pfam" id="PF01012">
    <property type="entry name" value="ETF"/>
    <property type="match status" value="1"/>
</dbReference>
<dbReference type="Pfam" id="PF00766">
    <property type="entry name" value="ETF_alpha"/>
    <property type="match status" value="1"/>
</dbReference>
<dbReference type="PIRSF" id="PIRSF000089">
    <property type="entry name" value="Electra_flavoP_a"/>
    <property type="match status" value="1"/>
</dbReference>
<dbReference type="SMART" id="SM00893">
    <property type="entry name" value="ETF"/>
    <property type="match status" value="1"/>
</dbReference>
<dbReference type="SUPFAM" id="SSF52402">
    <property type="entry name" value="Adenine nucleotide alpha hydrolases-like"/>
    <property type="match status" value="1"/>
</dbReference>
<dbReference type="SUPFAM" id="SSF52467">
    <property type="entry name" value="DHS-like NAD/FAD-binding domain"/>
    <property type="match status" value="1"/>
</dbReference>
<dbReference type="PROSITE" id="PS00696">
    <property type="entry name" value="ETF_ALPHA"/>
    <property type="match status" value="1"/>
</dbReference>
<gene>
    <name type="primary">fixB</name>
    <name type="ordered locus">AZC_3448</name>
</gene>
<accession>P26483</accession>
<accession>A8IIT7</accession>
<sequence>MSEPTKAPAASAGSRAATKKELPEHFKAYKHVWVFIEQERGQVHPVSWELMGAGRKLADKLKVELAAIVLGPDDEATQHAAAEAFSYGADLTYVVADPLLTDYRNEAYTKALTDVVNTYKPEILLLGATTLGRDLAGSVATTLLTGLTADCTELDVDADGSLAATRPTFGGSLLCTIYTLNYRPQMATVRPRVMPMPEREEKPIGRIITHPLGMVEDDIVTKILSFLPDRDSAKSNLAYADVVVAGGLGLGSPENFQLVRQLAGVLGAEYGCSRPLVQKGWVTSDRQIGQTGKTIRPKLYIAAGISGAIQHRVGVEGADMIVAINTDKNAPIFDFAHVGIVTDAIRLLPALTEAFRARLSPHSRDRIAS</sequence>
<reference key="1">
    <citation type="journal article" date="1991" name="Mol. Gen. Genet.">
        <title>Nucleotide sequence of the fixABC region of Azorhizobium caulinodans ORS571: similarity of the fixB product with eukaryotic flavoproteins, characterization of fixX, and identification of nifW.</title>
        <authorList>
            <person name="Arigoni F."/>
            <person name="Kaminski P.A."/>
            <person name="Hennecke H."/>
            <person name="Elmerich C."/>
        </authorList>
    </citation>
    <scope>NUCLEOTIDE SEQUENCE [GENOMIC DNA]</scope>
</reference>
<reference key="2">
    <citation type="submission" date="2007-04" db="EMBL/GenBank/DDBJ databases">
        <title>Complete genome sequence of the nitrogen-fixing bacterium Azorhizobium caulinodans ORS571.</title>
        <authorList>
            <person name="Lee K.B."/>
            <person name="Backer P.D."/>
            <person name="Aono T."/>
            <person name="Liu C.T."/>
            <person name="Suzuki S."/>
            <person name="Suzuki T."/>
            <person name="Kaneko T."/>
            <person name="Yamada M."/>
            <person name="Tabata S."/>
            <person name="Kupfer D.M."/>
            <person name="Najar F.Z."/>
            <person name="Wiley G.B."/>
            <person name="Roe B."/>
            <person name="Binnewies T."/>
            <person name="Ussery D."/>
            <person name="Vereecke D."/>
            <person name="Gevers D."/>
            <person name="Holsters M."/>
            <person name="Oyaizu H."/>
        </authorList>
    </citation>
    <scope>NUCLEOTIDE SEQUENCE [LARGE SCALE GENOMIC DNA]</scope>
    <source>
        <strain>ATCC 43989 / DSM 5975 / JCM 20966 / LMG 6465 / NBRC 14845 / NCIMB 13405 / ORS 571</strain>
    </source>
</reference>
<proteinExistence type="inferred from homology"/>
<organism>
    <name type="scientific">Azorhizobium caulinodans (strain ATCC 43989 / DSM 5975 / JCM 20966 / LMG 6465 / NBRC 14845 / NCIMB 13405 / ORS 571)</name>
    <dbReference type="NCBI Taxonomy" id="438753"/>
    <lineage>
        <taxon>Bacteria</taxon>
        <taxon>Pseudomonadati</taxon>
        <taxon>Pseudomonadota</taxon>
        <taxon>Alphaproteobacteria</taxon>
        <taxon>Hyphomicrobiales</taxon>
        <taxon>Xanthobacteraceae</taxon>
        <taxon>Azorhizobium</taxon>
    </lineage>
</organism>
<feature type="chain" id="PRO_0000167855" description="Protein FixB">
    <location>
        <begin position="1"/>
        <end position="369"/>
    </location>
</feature>
<feature type="binding site" evidence="1">
    <location>
        <begin position="299"/>
        <end position="327"/>
    </location>
    <ligand>
        <name>FAD</name>
        <dbReference type="ChEBI" id="CHEBI:57692"/>
    </ligand>
</feature>
<feature type="sequence conflict" description="In Ref. 1; CAA39092." evidence="2" ref="1">
    <original>S</original>
    <variation>T</variation>
    <location>
        <position position="14"/>
    </location>
</feature>
<feature type="sequence conflict" description="In Ref. 1; CAA39092." evidence="2" ref="1">
    <original>QL</original>
    <variation>HV</variation>
    <location>
        <begin position="261"/>
        <end position="262"/>
    </location>
</feature>
<evidence type="ECO:0000255" key="1"/>
<evidence type="ECO:0000305" key="2"/>